<keyword id="KW-0025">Alternative splicing</keyword>
<keyword id="KW-0131">Cell cycle</keyword>
<keyword id="KW-0132">Cell division</keyword>
<keyword id="KW-1017">Isopeptide bond</keyword>
<keyword id="KW-0498">Mitosis</keyword>
<keyword id="KW-0539">Nucleus</keyword>
<keyword id="KW-0597">Phosphoprotein</keyword>
<keyword id="KW-1185">Reference proteome</keyword>
<keyword id="KW-0832">Ubl conjugation</keyword>
<protein>
    <recommendedName>
        <fullName>Cell division cycle-associated protein 2</fullName>
    </recommendedName>
</protein>
<feature type="chain" id="PRO_0000287696" description="Cell division cycle-associated protein 2">
    <location>
        <begin position="1"/>
        <end position="982"/>
    </location>
</feature>
<feature type="domain" description="PP1-binding" evidence="2">
    <location>
        <begin position="379"/>
        <end position="436"/>
    </location>
</feature>
<feature type="region of interest" description="Disordered" evidence="3">
    <location>
        <begin position="75"/>
        <end position="97"/>
    </location>
</feature>
<feature type="region of interest" description="Disordered" evidence="3">
    <location>
        <begin position="192"/>
        <end position="216"/>
    </location>
</feature>
<feature type="region of interest" description="Disordered" evidence="3">
    <location>
        <begin position="274"/>
        <end position="315"/>
    </location>
</feature>
<feature type="region of interest" description="Disordered" evidence="3">
    <location>
        <begin position="400"/>
        <end position="473"/>
    </location>
</feature>
<feature type="region of interest" description="Disordered" evidence="3">
    <location>
        <begin position="489"/>
        <end position="545"/>
    </location>
</feature>
<feature type="region of interest" description="Disordered" evidence="3">
    <location>
        <begin position="568"/>
        <end position="638"/>
    </location>
</feature>
<feature type="region of interest" description="Disordered" evidence="3">
    <location>
        <begin position="651"/>
        <end position="716"/>
    </location>
</feature>
<feature type="region of interest" description="Disordered" evidence="3">
    <location>
        <begin position="910"/>
        <end position="982"/>
    </location>
</feature>
<feature type="compositionally biased region" description="Polar residues" evidence="3">
    <location>
        <begin position="75"/>
        <end position="87"/>
    </location>
</feature>
<feature type="compositionally biased region" description="Polar residues" evidence="3">
    <location>
        <begin position="207"/>
        <end position="216"/>
    </location>
</feature>
<feature type="compositionally biased region" description="Polar residues" evidence="3">
    <location>
        <begin position="275"/>
        <end position="315"/>
    </location>
</feature>
<feature type="compositionally biased region" description="Polar residues" evidence="3">
    <location>
        <begin position="451"/>
        <end position="473"/>
    </location>
</feature>
<feature type="compositionally biased region" description="Polar residues" evidence="3">
    <location>
        <begin position="498"/>
        <end position="512"/>
    </location>
</feature>
<feature type="compositionally biased region" description="Basic residues" evidence="3">
    <location>
        <begin position="518"/>
        <end position="545"/>
    </location>
</feature>
<feature type="compositionally biased region" description="Polar residues" evidence="3">
    <location>
        <begin position="651"/>
        <end position="668"/>
    </location>
</feature>
<feature type="compositionally biased region" description="Basic and acidic residues" evidence="3">
    <location>
        <begin position="669"/>
        <end position="685"/>
    </location>
</feature>
<feature type="compositionally biased region" description="Low complexity" evidence="3">
    <location>
        <begin position="931"/>
        <end position="942"/>
    </location>
</feature>
<feature type="compositionally biased region" description="Polar residues" evidence="3">
    <location>
        <begin position="952"/>
        <end position="964"/>
    </location>
</feature>
<feature type="modified residue" description="Phosphoserine" evidence="2">
    <location>
        <position position="100"/>
    </location>
</feature>
<feature type="modified residue" description="Phosphoserine" evidence="2">
    <location>
        <position position="122"/>
    </location>
</feature>
<feature type="modified residue" description="Phosphoserine" evidence="2">
    <location>
        <position position="133"/>
    </location>
</feature>
<feature type="modified residue" description="Phosphoserine" evidence="2">
    <location>
        <position position="286"/>
    </location>
</feature>
<feature type="modified residue" description="Phosphoserine" evidence="6">
    <location>
        <position position="296"/>
    </location>
</feature>
<feature type="modified residue" description="Phosphoserine" evidence="2">
    <location>
        <position position="306"/>
    </location>
</feature>
<feature type="modified residue" description="Phosphothreonine" evidence="2">
    <location>
        <position position="309"/>
    </location>
</feature>
<feature type="modified residue" description="Phosphoserine" evidence="2">
    <location>
        <position position="390"/>
    </location>
</feature>
<feature type="modified residue" description="Phosphoserine" evidence="2">
    <location>
        <position position="397"/>
    </location>
</feature>
<feature type="modified residue" description="Phosphothreonine" evidence="2">
    <location>
        <position position="402"/>
    </location>
</feature>
<feature type="modified residue" description="Phosphoserine" evidence="2">
    <location>
        <position position="424"/>
    </location>
</feature>
<feature type="modified residue" description="Phosphoserine" evidence="2">
    <location>
        <position position="572"/>
    </location>
</feature>
<feature type="modified residue" description="Phosphoserine" evidence="2">
    <location>
        <position position="595"/>
    </location>
</feature>
<feature type="modified residue" description="Phosphoserine" evidence="2">
    <location>
        <position position="735"/>
    </location>
</feature>
<feature type="modified residue" description="Phosphoserine" evidence="2">
    <location>
        <position position="913"/>
    </location>
</feature>
<feature type="modified residue" description="Phosphoserine" evidence="2">
    <location>
        <position position="950"/>
    </location>
</feature>
<feature type="modified residue" description="Phosphoserine" evidence="2">
    <location>
        <position position="973"/>
    </location>
</feature>
<feature type="cross-link" description="Glycyl lysine isopeptide (Lys-Gly) (interchain with G-Cter in SUMO2)" evidence="2">
    <location>
        <position position="741"/>
    </location>
</feature>
<feature type="splice variant" id="VSP_025600" description="In isoform 2." evidence="4">
    <original>ESNLCDDGAHLISYPSNSCKEGRAGRENCKTPGCLNPRKRKRVTFGEDLSPE</original>
    <variation>VRVTLPKAKEFRDVCFRAVREIHVSHWCAGKPSLVCHFLKSQYYSEIGSVFK</variation>
    <location>
        <begin position="341"/>
        <end position="392"/>
    </location>
</feature>
<feature type="splice variant" id="VSP_025601" description="In isoform 2." evidence="4">
    <location>
        <begin position="393"/>
        <end position="982"/>
    </location>
</feature>
<feature type="sequence conflict" description="In Ref. 1; BAC27343." evidence="5" ref="1">
    <original>P</original>
    <variation>H</variation>
    <location>
        <position position="391"/>
    </location>
</feature>
<organism>
    <name type="scientific">Mus musculus</name>
    <name type="common">Mouse</name>
    <dbReference type="NCBI Taxonomy" id="10090"/>
    <lineage>
        <taxon>Eukaryota</taxon>
        <taxon>Metazoa</taxon>
        <taxon>Chordata</taxon>
        <taxon>Craniata</taxon>
        <taxon>Vertebrata</taxon>
        <taxon>Euteleostomi</taxon>
        <taxon>Mammalia</taxon>
        <taxon>Eutheria</taxon>
        <taxon>Euarchontoglires</taxon>
        <taxon>Glires</taxon>
        <taxon>Rodentia</taxon>
        <taxon>Myomorpha</taxon>
        <taxon>Muroidea</taxon>
        <taxon>Muridae</taxon>
        <taxon>Murinae</taxon>
        <taxon>Mus</taxon>
        <taxon>Mus</taxon>
    </lineage>
</organism>
<sequence>MDASSHDKPLSESKECVLNNSENDVFRLGTEPFVTPQKHVADATPNLCTPDTFKSPLDFTTVTVEQLGITPESFVKTSSGKSTSSLQKARRRSTVGVRGSPETNCLIRFIAQQRNLKKAVLSPLAREPHFEGSPRLYRNASVLRERMSAFRSAFHSIQETKMASSPSAAEADGESRISDLTRKEDLLEYQQSGFPVNSSSKRRRISSQDSPDNYLSGTKALADEACAGGASTDLAEKSPDIGSAQPGCMAAPLPELRETSQGLAVTDCVEGPVTPLSSGTATATRSPETPMCGSSSPSAKTTATRSPATPVCGSSTPSAKTFVLRSVLKKPGKLFSENGKESNLCDDGAHLISYPSNSCKEGRAGRENCKTPGCLNPRKRKRVTFGEDLSPEVFDESLPANTPLCKGGTPVRPRTVKTTSPLQSPVHEQFLQPNFDDKEENLENIEPPQGSFANLSLSKSSLSETPPGTNTCSSLNKDEEIICSIVRPTRTSQRRKQTLSSTGVCSSYTTQAEPRKEKMSRRKSREKKHTSAALPKKKQVLKSYRKKKKGKKDVEKCFYGPRDIASKKPLLSPIPELPEVSEATPLADCTQGTSSDDFNKCGQLEEVNSFEIPTQRKRRLPQKADSPELDPAHHQSQVSDKCCYLLPLTTASERGPNASTRDTGSEGNTRAESKCQSAKEPKPGTKMESGLVPRASVTQDHIVSKNPKPLGSPQSQDLFKAGQNLENPCEILIVSESMNLKCEKESECLAPQGSLQGSPVSTDSKRDLNCSEDVLIQNIKEPASHSENVGRKCAGNGSPGSGRERKWRRRTVCCGGQSSYLEQNGNPASSCSGENFVEISLESVQLIEELSNTIEQSFQRTSSKTKVRRSTRLQRDLENTGLVWLSPSPSTLQKPRRRMTICTLDSRGFECPSSKEETISSGQNPGPLPAVSGSESQGVGSSALPRKRRSLCGSTLTDANSATQPPDCKRKPSLKGESAQLP</sequence>
<comment type="function">
    <text evidence="1">Regulator of chromosome structure during mitosis required for condensin-depleted chromosomes to retain their compact architecture through anaphase. Acts by mediating the recruitment of phopsphatase PP1-gamma subunit (PPP1CC) to chromatin at anaphase and into the following interphase. At anaphase onset, its association with chromatin targets a pool of PPP1CC to dephosphorylate substrates (By similarity).</text>
</comment>
<comment type="subunit">
    <text evidence="1">Interacts with PPP1CC.</text>
</comment>
<comment type="subcellular location">
    <subcellularLocation>
        <location evidence="1">Nucleus</location>
    </subcellularLocation>
    <text evidence="1">Excluded from the nucleolus. Present in nucleoplasm throughout the G1, S and G2 stages of the cell cycle. During M phase, it becomes diffuse throughout the cell as the nuclear membrane breaks down, and faintly accumulates later on metaphase chromatin. As the cell progresses to anaphase, it accumulates on chromatin (By similarity).</text>
</comment>
<comment type="alternative products">
    <event type="alternative splicing"/>
    <isoform>
        <id>Q14B71-1</id>
        <name>1</name>
        <sequence type="displayed"/>
    </isoform>
    <isoform>
        <id>Q14B71-2</id>
        <name>2</name>
        <sequence type="described" ref="VSP_025600 VSP_025601"/>
    </isoform>
</comment>
<comment type="PTM">
    <text evidence="1">Phosphorylated by CDK1. May regulate its subcellular location (By similarity).</text>
</comment>
<comment type="sequence caution" evidence="5">
    <conflict type="erroneous initiation">
        <sequence resource="EMBL-CDS" id="AAI16299"/>
    </conflict>
</comment>
<comment type="sequence caution" evidence="5">
    <conflict type="erroneous initiation">
        <sequence resource="EMBL-CDS" id="AAI16300"/>
    </conflict>
</comment>
<comment type="sequence caution" evidence="5">
    <conflict type="erroneous initiation">
        <sequence resource="EMBL-CDS" id="BAC27343"/>
    </conflict>
</comment>
<reference key="1">
    <citation type="journal article" date="2005" name="Science">
        <title>The transcriptional landscape of the mammalian genome.</title>
        <authorList>
            <person name="Carninci P."/>
            <person name="Kasukawa T."/>
            <person name="Katayama S."/>
            <person name="Gough J."/>
            <person name="Frith M.C."/>
            <person name="Maeda N."/>
            <person name="Oyama R."/>
            <person name="Ravasi T."/>
            <person name="Lenhard B."/>
            <person name="Wells C."/>
            <person name="Kodzius R."/>
            <person name="Shimokawa K."/>
            <person name="Bajic V.B."/>
            <person name="Brenner S.E."/>
            <person name="Batalov S."/>
            <person name="Forrest A.R."/>
            <person name="Zavolan M."/>
            <person name="Davis M.J."/>
            <person name="Wilming L.G."/>
            <person name="Aidinis V."/>
            <person name="Allen J.E."/>
            <person name="Ambesi-Impiombato A."/>
            <person name="Apweiler R."/>
            <person name="Aturaliya R.N."/>
            <person name="Bailey T.L."/>
            <person name="Bansal M."/>
            <person name="Baxter L."/>
            <person name="Beisel K.W."/>
            <person name="Bersano T."/>
            <person name="Bono H."/>
            <person name="Chalk A.M."/>
            <person name="Chiu K.P."/>
            <person name="Choudhary V."/>
            <person name="Christoffels A."/>
            <person name="Clutterbuck D.R."/>
            <person name="Crowe M.L."/>
            <person name="Dalla E."/>
            <person name="Dalrymple B.P."/>
            <person name="de Bono B."/>
            <person name="Della Gatta G."/>
            <person name="di Bernardo D."/>
            <person name="Down T."/>
            <person name="Engstrom P."/>
            <person name="Fagiolini M."/>
            <person name="Faulkner G."/>
            <person name="Fletcher C.F."/>
            <person name="Fukushima T."/>
            <person name="Furuno M."/>
            <person name="Futaki S."/>
            <person name="Gariboldi M."/>
            <person name="Georgii-Hemming P."/>
            <person name="Gingeras T.R."/>
            <person name="Gojobori T."/>
            <person name="Green R.E."/>
            <person name="Gustincich S."/>
            <person name="Harbers M."/>
            <person name="Hayashi Y."/>
            <person name="Hensch T.K."/>
            <person name="Hirokawa N."/>
            <person name="Hill D."/>
            <person name="Huminiecki L."/>
            <person name="Iacono M."/>
            <person name="Ikeo K."/>
            <person name="Iwama A."/>
            <person name="Ishikawa T."/>
            <person name="Jakt M."/>
            <person name="Kanapin A."/>
            <person name="Katoh M."/>
            <person name="Kawasawa Y."/>
            <person name="Kelso J."/>
            <person name="Kitamura H."/>
            <person name="Kitano H."/>
            <person name="Kollias G."/>
            <person name="Krishnan S.P."/>
            <person name="Kruger A."/>
            <person name="Kummerfeld S.K."/>
            <person name="Kurochkin I.V."/>
            <person name="Lareau L.F."/>
            <person name="Lazarevic D."/>
            <person name="Lipovich L."/>
            <person name="Liu J."/>
            <person name="Liuni S."/>
            <person name="McWilliam S."/>
            <person name="Madan Babu M."/>
            <person name="Madera M."/>
            <person name="Marchionni L."/>
            <person name="Matsuda H."/>
            <person name="Matsuzawa S."/>
            <person name="Miki H."/>
            <person name="Mignone F."/>
            <person name="Miyake S."/>
            <person name="Morris K."/>
            <person name="Mottagui-Tabar S."/>
            <person name="Mulder N."/>
            <person name="Nakano N."/>
            <person name="Nakauchi H."/>
            <person name="Ng P."/>
            <person name="Nilsson R."/>
            <person name="Nishiguchi S."/>
            <person name="Nishikawa S."/>
            <person name="Nori F."/>
            <person name="Ohara O."/>
            <person name="Okazaki Y."/>
            <person name="Orlando V."/>
            <person name="Pang K.C."/>
            <person name="Pavan W.J."/>
            <person name="Pavesi G."/>
            <person name="Pesole G."/>
            <person name="Petrovsky N."/>
            <person name="Piazza S."/>
            <person name="Reed J."/>
            <person name="Reid J.F."/>
            <person name="Ring B.Z."/>
            <person name="Ringwald M."/>
            <person name="Rost B."/>
            <person name="Ruan Y."/>
            <person name="Salzberg S.L."/>
            <person name="Sandelin A."/>
            <person name="Schneider C."/>
            <person name="Schoenbach C."/>
            <person name="Sekiguchi K."/>
            <person name="Semple C.A."/>
            <person name="Seno S."/>
            <person name="Sessa L."/>
            <person name="Sheng Y."/>
            <person name="Shibata Y."/>
            <person name="Shimada H."/>
            <person name="Shimada K."/>
            <person name="Silva D."/>
            <person name="Sinclair B."/>
            <person name="Sperling S."/>
            <person name="Stupka E."/>
            <person name="Sugiura K."/>
            <person name="Sultana R."/>
            <person name="Takenaka Y."/>
            <person name="Taki K."/>
            <person name="Tammoja K."/>
            <person name="Tan S.L."/>
            <person name="Tang S."/>
            <person name="Taylor M.S."/>
            <person name="Tegner J."/>
            <person name="Teichmann S.A."/>
            <person name="Ueda H.R."/>
            <person name="van Nimwegen E."/>
            <person name="Verardo R."/>
            <person name="Wei C.L."/>
            <person name="Yagi K."/>
            <person name="Yamanishi H."/>
            <person name="Zabarovsky E."/>
            <person name="Zhu S."/>
            <person name="Zimmer A."/>
            <person name="Hide W."/>
            <person name="Bult C."/>
            <person name="Grimmond S.M."/>
            <person name="Teasdale R.D."/>
            <person name="Liu E.T."/>
            <person name="Brusic V."/>
            <person name="Quackenbush J."/>
            <person name="Wahlestedt C."/>
            <person name="Mattick J.S."/>
            <person name="Hume D.A."/>
            <person name="Kai C."/>
            <person name="Sasaki D."/>
            <person name="Tomaru Y."/>
            <person name="Fukuda S."/>
            <person name="Kanamori-Katayama M."/>
            <person name="Suzuki M."/>
            <person name="Aoki J."/>
            <person name="Arakawa T."/>
            <person name="Iida J."/>
            <person name="Imamura K."/>
            <person name="Itoh M."/>
            <person name="Kato T."/>
            <person name="Kawaji H."/>
            <person name="Kawagashira N."/>
            <person name="Kawashima T."/>
            <person name="Kojima M."/>
            <person name="Kondo S."/>
            <person name="Konno H."/>
            <person name="Nakano K."/>
            <person name="Ninomiya N."/>
            <person name="Nishio T."/>
            <person name="Okada M."/>
            <person name="Plessy C."/>
            <person name="Shibata K."/>
            <person name="Shiraki T."/>
            <person name="Suzuki S."/>
            <person name="Tagami M."/>
            <person name="Waki K."/>
            <person name="Watahiki A."/>
            <person name="Okamura-Oho Y."/>
            <person name="Suzuki H."/>
            <person name="Kawai J."/>
            <person name="Hayashizaki Y."/>
        </authorList>
    </citation>
    <scope>NUCLEOTIDE SEQUENCE [LARGE SCALE MRNA] (ISOFORM 2)</scope>
    <scope>NUCLEOTIDE SEQUENCE [LARGE SCALE MRNA] OF 157-982 (ISOFORM 1)</scope>
    <source>
        <strain>C57BL/6J</strain>
        <tissue>Forelimb</tissue>
        <tissue>Testis</tissue>
    </source>
</reference>
<reference key="2">
    <citation type="journal article" date="2009" name="PLoS Biol.">
        <title>Lineage-specific biology revealed by a finished genome assembly of the mouse.</title>
        <authorList>
            <person name="Church D.M."/>
            <person name="Goodstadt L."/>
            <person name="Hillier L.W."/>
            <person name="Zody M.C."/>
            <person name="Goldstein S."/>
            <person name="She X."/>
            <person name="Bult C.J."/>
            <person name="Agarwala R."/>
            <person name="Cherry J.L."/>
            <person name="DiCuccio M."/>
            <person name="Hlavina W."/>
            <person name="Kapustin Y."/>
            <person name="Meric P."/>
            <person name="Maglott D."/>
            <person name="Birtle Z."/>
            <person name="Marques A.C."/>
            <person name="Graves T."/>
            <person name="Zhou S."/>
            <person name="Teague B."/>
            <person name="Potamousis K."/>
            <person name="Churas C."/>
            <person name="Place M."/>
            <person name="Herschleb J."/>
            <person name="Runnheim R."/>
            <person name="Forrest D."/>
            <person name="Amos-Landgraf J."/>
            <person name="Schwartz D.C."/>
            <person name="Cheng Z."/>
            <person name="Lindblad-Toh K."/>
            <person name="Eichler E.E."/>
            <person name="Ponting C.P."/>
        </authorList>
    </citation>
    <scope>NUCLEOTIDE SEQUENCE [LARGE SCALE GENOMIC DNA]</scope>
    <source>
        <strain>C57BL/6J</strain>
    </source>
</reference>
<reference key="3">
    <citation type="journal article" date="2004" name="Genome Res.">
        <title>The status, quality, and expansion of the NIH full-length cDNA project: the Mammalian Gene Collection (MGC).</title>
        <authorList>
            <consortium name="The MGC Project Team"/>
        </authorList>
    </citation>
    <scope>NUCLEOTIDE SEQUENCE [LARGE SCALE MRNA] OF 157-982 (ISOFORM 1)</scope>
</reference>
<reference key="4">
    <citation type="journal article" date="2010" name="Cell">
        <title>A tissue-specific atlas of mouse protein phosphorylation and expression.</title>
        <authorList>
            <person name="Huttlin E.L."/>
            <person name="Jedrychowski M.P."/>
            <person name="Elias J.E."/>
            <person name="Goswami T."/>
            <person name="Rad R."/>
            <person name="Beausoleil S.A."/>
            <person name="Villen J."/>
            <person name="Haas W."/>
            <person name="Sowa M.E."/>
            <person name="Gygi S.P."/>
        </authorList>
    </citation>
    <scope>PHOSPHORYLATION [LARGE SCALE ANALYSIS] AT SER-296</scope>
    <scope>IDENTIFICATION BY MASS SPECTROMETRY [LARGE SCALE ANALYSIS]</scope>
    <source>
        <tissue>Testis</tissue>
    </source>
</reference>
<accession>Q14B71</accession>
<accession>Q8BSQ1</accession>
<accession>Q8CD75</accession>
<name>CDCA2_MOUSE</name>
<evidence type="ECO:0000250" key="1"/>
<evidence type="ECO:0000250" key="2">
    <source>
        <dbReference type="UniProtKB" id="Q69YH5"/>
    </source>
</evidence>
<evidence type="ECO:0000256" key="3">
    <source>
        <dbReference type="SAM" id="MobiDB-lite"/>
    </source>
</evidence>
<evidence type="ECO:0000303" key="4">
    <source>
    </source>
</evidence>
<evidence type="ECO:0000305" key="5"/>
<evidence type="ECO:0007744" key="6">
    <source>
    </source>
</evidence>
<gene>
    <name type="primary">Cdca2</name>
</gene>
<dbReference type="EMBL" id="AK031083">
    <property type="protein sequence ID" value="BAC27245.1"/>
    <property type="molecule type" value="mRNA"/>
</dbReference>
<dbReference type="EMBL" id="AK031313">
    <property type="protein sequence ID" value="BAC27343.1"/>
    <property type="status" value="ALT_INIT"/>
    <property type="molecule type" value="mRNA"/>
</dbReference>
<dbReference type="EMBL" id="AC093020">
    <property type="status" value="NOT_ANNOTATED_CDS"/>
    <property type="molecule type" value="Genomic_DNA"/>
</dbReference>
<dbReference type="EMBL" id="BC116298">
    <property type="protein sequence ID" value="AAI16299.1"/>
    <property type="status" value="ALT_INIT"/>
    <property type="molecule type" value="mRNA"/>
</dbReference>
<dbReference type="EMBL" id="BC116299">
    <property type="protein sequence ID" value="AAI16300.1"/>
    <property type="status" value="ALT_INIT"/>
    <property type="molecule type" value="mRNA"/>
</dbReference>
<dbReference type="CCDS" id="CCDS36962.2">
    <molecule id="Q14B71-1"/>
</dbReference>
<dbReference type="RefSeq" id="NP_001103632.1">
    <molecule id="Q14B71-1"/>
    <property type="nucleotide sequence ID" value="NM_001110162.1"/>
</dbReference>
<dbReference type="RefSeq" id="NP_780593.3">
    <molecule id="Q14B71-1"/>
    <property type="nucleotide sequence ID" value="NM_175384.4"/>
</dbReference>
<dbReference type="RefSeq" id="XP_006518483.1">
    <molecule id="Q14B71-1"/>
    <property type="nucleotide sequence ID" value="XM_006518420.5"/>
</dbReference>
<dbReference type="SMR" id="Q14B71"/>
<dbReference type="BioGRID" id="224470">
    <property type="interactions" value="1"/>
</dbReference>
<dbReference type="FunCoup" id="Q14B71">
    <property type="interactions" value="2403"/>
</dbReference>
<dbReference type="STRING" id="10090.ENSMUSP00000127571"/>
<dbReference type="GlyGen" id="Q14B71">
    <property type="glycosylation" value="1 site, 1 O-linked glycan (1 site)"/>
</dbReference>
<dbReference type="iPTMnet" id="Q14B71"/>
<dbReference type="PhosphoSitePlus" id="Q14B71"/>
<dbReference type="jPOST" id="Q14B71"/>
<dbReference type="PaxDb" id="10090-ENSMUSP00000117847"/>
<dbReference type="PeptideAtlas" id="Q14B71"/>
<dbReference type="ProteomicsDB" id="281139">
    <molecule id="Q14B71-1"/>
</dbReference>
<dbReference type="ProteomicsDB" id="281140">
    <molecule id="Q14B71-2"/>
</dbReference>
<dbReference type="Pumba" id="Q14B71"/>
<dbReference type="Antibodypedia" id="10001">
    <property type="antibodies" value="143 antibodies from 27 providers"/>
</dbReference>
<dbReference type="DNASU" id="108912"/>
<dbReference type="Ensembl" id="ENSMUST00000150006.9">
    <molecule id="Q14B71-1"/>
    <property type="protein sequence ID" value="ENSMUSP00000117847.3"/>
    <property type="gene ID" value="ENSMUSG00000048922.19"/>
</dbReference>
<dbReference type="Ensembl" id="ENSMUST00000163100.8">
    <molecule id="Q14B71-1"/>
    <property type="protein sequence ID" value="ENSMUSP00000127571.2"/>
    <property type="gene ID" value="ENSMUSG00000048922.19"/>
</dbReference>
<dbReference type="GeneID" id="108912"/>
<dbReference type="KEGG" id="mmu:108912"/>
<dbReference type="UCSC" id="uc007ulb.2">
    <molecule id="Q14B71-1"/>
    <property type="organism name" value="mouse"/>
</dbReference>
<dbReference type="UCSC" id="uc007uld.2">
    <molecule id="Q14B71-2"/>
    <property type="organism name" value="mouse"/>
</dbReference>
<dbReference type="AGR" id="MGI:1919787"/>
<dbReference type="CTD" id="157313"/>
<dbReference type="MGI" id="MGI:1919787">
    <property type="gene designation" value="Cdca2"/>
</dbReference>
<dbReference type="VEuPathDB" id="HostDB:ENSMUSG00000048922"/>
<dbReference type="eggNOG" id="ENOG502S079">
    <property type="taxonomic scope" value="Eukaryota"/>
</dbReference>
<dbReference type="GeneTree" id="ENSGT00940000154352"/>
<dbReference type="HOGENOM" id="CLU_011968_0_0_1"/>
<dbReference type="InParanoid" id="Q14B71"/>
<dbReference type="OMA" id="QKECDCS"/>
<dbReference type="OrthoDB" id="9947694at2759"/>
<dbReference type="PhylomeDB" id="Q14B71"/>
<dbReference type="TreeFam" id="TF336000"/>
<dbReference type="BioGRID-ORCS" id="108912">
    <property type="hits" value="1 hit in 78 CRISPR screens"/>
</dbReference>
<dbReference type="ChiTaRS" id="Cdca2">
    <property type="organism name" value="mouse"/>
</dbReference>
<dbReference type="PRO" id="PR:Q14B71"/>
<dbReference type="Proteomes" id="UP000000589">
    <property type="component" value="Chromosome 14"/>
</dbReference>
<dbReference type="RNAct" id="Q14B71">
    <property type="molecule type" value="protein"/>
</dbReference>
<dbReference type="Bgee" id="ENSMUSG00000048922">
    <property type="expression patterns" value="Expressed in manus and 153 other cell types or tissues"/>
</dbReference>
<dbReference type="ExpressionAtlas" id="Q14B71">
    <property type="expression patterns" value="baseline and differential"/>
</dbReference>
<dbReference type="GO" id="GO:0005694">
    <property type="term" value="C:chromosome"/>
    <property type="evidence" value="ECO:0000266"/>
    <property type="project" value="MGI"/>
</dbReference>
<dbReference type="GO" id="GO:0005829">
    <property type="term" value="C:cytosol"/>
    <property type="evidence" value="ECO:0007669"/>
    <property type="project" value="Ensembl"/>
</dbReference>
<dbReference type="GO" id="GO:0005654">
    <property type="term" value="C:nucleoplasm"/>
    <property type="evidence" value="ECO:0007669"/>
    <property type="project" value="Ensembl"/>
</dbReference>
<dbReference type="GO" id="GO:0019888">
    <property type="term" value="F:protein phosphatase regulator activity"/>
    <property type="evidence" value="ECO:0000266"/>
    <property type="project" value="MGI"/>
</dbReference>
<dbReference type="GO" id="GO:0051301">
    <property type="term" value="P:cell division"/>
    <property type="evidence" value="ECO:0007669"/>
    <property type="project" value="UniProtKB-KW"/>
</dbReference>
<dbReference type="GO" id="GO:0007059">
    <property type="term" value="P:chromosome segregation"/>
    <property type="evidence" value="ECO:0000314"/>
    <property type="project" value="MGI"/>
</dbReference>
<dbReference type="InterPro" id="IPR029334">
    <property type="entry name" value="PP1-bd"/>
</dbReference>
<dbReference type="PANTHER" id="PTHR21603">
    <property type="entry name" value="ANTIGEN KI-67-LIKE PROTEIN"/>
    <property type="match status" value="1"/>
</dbReference>
<dbReference type="PANTHER" id="PTHR21603:SF16">
    <property type="entry name" value="CELL DIVISION CYCLE-ASSOCIATED PROTEIN 2"/>
    <property type="match status" value="1"/>
</dbReference>
<dbReference type="Pfam" id="PF15276">
    <property type="entry name" value="PP1_bind"/>
    <property type="match status" value="1"/>
</dbReference>
<proteinExistence type="evidence at protein level"/>